<reference evidence="15 19" key="1">
    <citation type="journal article" date="2002" name="Carcinogenesis">
        <title>Protocadherin LKC, a new candidate for a tumor suppressor of colon and liver cancers, its association with contact inhibition of cell proliferation.</title>
        <authorList>
            <person name="Okazaki N."/>
            <person name="Takahashi N."/>
            <person name="Kojima S."/>
            <person name="Masuho Y."/>
            <person name="Koga H."/>
        </authorList>
    </citation>
    <scope>NUCLEOTIDE SEQUENCE [MRNA] (ISOFORM 1)</scope>
    <scope>VARIANTS GLU-388; MET-659 AND GLY-1551</scope>
    <scope>SUBCELLULAR LOCATION</scope>
    <scope>INTERACTION WITH CDHR2</scope>
    <source>
        <tissue evidence="19">Brain</tissue>
    </source>
</reference>
<reference key="2">
    <citation type="journal article" date="2006" name="Nature">
        <title>The DNA sequence and biological annotation of human chromosome 1.</title>
        <authorList>
            <person name="Gregory S.G."/>
            <person name="Barlow K.F."/>
            <person name="McLay K.E."/>
            <person name="Kaul R."/>
            <person name="Swarbreck D."/>
            <person name="Dunham A."/>
            <person name="Scott C.E."/>
            <person name="Howe K.L."/>
            <person name="Woodfine K."/>
            <person name="Spencer C.C.A."/>
            <person name="Jones M.C."/>
            <person name="Gillson C."/>
            <person name="Searle S."/>
            <person name="Zhou Y."/>
            <person name="Kokocinski F."/>
            <person name="McDonald L."/>
            <person name="Evans R."/>
            <person name="Phillips K."/>
            <person name="Atkinson A."/>
            <person name="Cooper R."/>
            <person name="Jones C."/>
            <person name="Hall R.E."/>
            <person name="Andrews T.D."/>
            <person name="Lloyd C."/>
            <person name="Ainscough R."/>
            <person name="Almeida J.P."/>
            <person name="Ambrose K.D."/>
            <person name="Anderson F."/>
            <person name="Andrew R.W."/>
            <person name="Ashwell R.I.S."/>
            <person name="Aubin K."/>
            <person name="Babbage A.K."/>
            <person name="Bagguley C.L."/>
            <person name="Bailey J."/>
            <person name="Beasley H."/>
            <person name="Bethel G."/>
            <person name="Bird C.P."/>
            <person name="Bray-Allen S."/>
            <person name="Brown J.Y."/>
            <person name="Brown A.J."/>
            <person name="Buckley D."/>
            <person name="Burton J."/>
            <person name="Bye J."/>
            <person name="Carder C."/>
            <person name="Chapman J.C."/>
            <person name="Clark S.Y."/>
            <person name="Clarke G."/>
            <person name="Clee C."/>
            <person name="Cobley V."/>
            <person name="Collier R.E."/>
            <person name="Corby N."/>
            <person name="Coville G.J."/>
            <person name="Davies J."/>
            <person name="Deadman R."/>
            <person name="Dunn M."/>
            <person name="Earthrowl M."/>
            <person name="Ellington A.G."/>
            <person name="Errington H."/>
            <person name="Frankish A."/>
            <person name="Frankland J."/>
            <person name="French L."/>
            <person name="Garner P."/>
            <person name="Garnett J."/>
            <person name="Gay L."/>
            <person name="Ghori M.R.J."/>
            <person name="Gibson R."/>
            <person name="Gilby L.M."/>
            <person name="Gillett W."/>
            <person name="Glithero R.J."/>
            <person name="Grafham D.V."/>
            <person name="Griffiths C."/>
            <person name="Griffiths-Jones S."/>
            <person name="Grocock R."/>
            <person name="Hammond S."/>
            <person name="Harrison E.S.I."/>
            <person name="Hart E."/>
            <person name="Haugen E."/>
            <person name="Heath P.D."/>
            <person name="Holmes S."/>
            <person name="Holt K."/>
            <person name="Howden P.J."/>
            <person name="Hunt A.R."/>
            <person name="Hunt S.E."/>
            <person name="Hunter G."/>
            <person name="Isherwood J."/>
            <person name="James R."/>
            <person name="Johnson C."/>
            <person name="Johnson D."/>
            <person name="Joy A."/>
            <person name="Kay M."/>
            <person name="Kershaw J.K."/>
            <person name="Kibukawa M."/>
            <person name="Kimberley A.M."/>
            <person name="King A."/>
            <person name="Knights A.J."/>
            <person name="Lad H."/>
            <person name="Laird G."/>
            <person name="Lawlor S."/>
            <person name="Leongamornlert D.A."/>
            <person name="Lloyd D.M."/>
            <person name="Loveland J."/>
            <person name="Lovell J."/>
            <person name="Lush M.J."/>
            <person name="Lyne R."/>
            <person name="Martin S."/>
            <person name="Mashreghi-Mohammadi M."/>
            <person name="Matthews L."/>
            <person name="Matthews N.S.W."/>
            <person name="McLaren S."/>
            <person name="Milne S."/>
            <person name="Mistry S."/>
            <person name="Moore M.J.F."/>
            <person name="Nickerson T."/>
            <person name="O'Dell C.N."/>
            <person name="Oliver K."/>
            <person name="Palmeiri A."/>
            <person name="Palmer S.A."/>
            <person name="Parker A."/>
            <person name="Patel D."/>
            <person name="Pearce A.V."/>
            <person name="Peck A.I."/>
            <person name="Pelan S."/>
            <person name="Phelps K."/>
            <person name="Phillimore B.J."/>
            <person name="Plumb R."/>
            <person name="Rajan J."/>
            <person name="Raymond C."/>
            <person name="Rouse G."/>
            <person name="Saenphimmachak C."/>
            <person name="Sehra H.K."/>
            <person name="Sheridan E."/>
            <person name="Shownkeen R."/>
            <person name="Sims S."/>
            <person name="Skuce C.D."/>
            <person name="Smith M."/>
            <person name="Steward C."/>
            <person name="Subramanian S."/>
            <person name="Sycamore N."/>
            <person name="Tracey A."/>
            <person name="Tromans A."/>
            <person name="Van Helmond Z."/>
            <person name="Wall M."/>
            <person name="Wallis J.M."/>
            <person name="White S."/>
            <person name="Whitehead S.L."/>
            <person name="Wilkinson J.E."/>
            <person name="Willey D.L."/>
            <person name="Williams H."/>
            <person name="Wilming L."/>
            <person name="Wray P.W."/>
            <person name="Wu Z."/>
            <person name="Coulson A."/>
            <person name="Vaudin M."/>
            <person name="Sulston J.E."/>
            <person name="Durbin R.M."/>
            <person name="Hubbard T."/>
            <person name="Wooster R."/>
            <person name="Dunham I."/>
            <person name="Carter N.P."/>
            <person name="McVean G."/>
            <person name="Ross M.T."/>
            <person name="Harrow J."/>
            <person name="Olson M.V."/>
            <person name="Beck S."/>
            <person name="Rogers J."/>
            <person name="Bentley D.R."/>
        </authorList>
    </citation>
    <scope>NUCLEOTIDE SEQUENCE [LARGE SCALE GENOMIC DNA] (ISOFORM 1)</scope>
</reference>
<reference evidence="15 17" key="3">
    <citation type="journal article" date="2004" name="Genome Res.">
        <title>The status, quality, and expansion of the NIH full-length cDNA project: the Mammalian Gene Collection (MGC).</title>
        <authorList>
            <consortium name="The MGC Project Team"/>
        </authorList>
    </citation>
    <scope>NUCLEOTIDE SEQUENCE [LARGE SCALE MRNA] (ISOFORM 1)</scope>
    <scope>NUCLEOTIDE SEQUENCE [LARGE SCALE MRNA] OF 281-1798 (ISOFORM 2)</scope>
    <scope>VARIANT MET-659</scope>
    <source>
        <tissue evidence="17">Lymph</tissue>
        <tissue evidence="16">Placenta</tissue>
    </source>
</reference>
<reference evidence="15 18" key="4">
    <citation type="journal article" date="1998" name="DNA Res.">
        <title>Prediction of the coding sequences of unidentified human genes. XI. The complete sequences of 100 new cDNA clones from brain which code for large proteins in vitro.</title>
        <authorList>
            <person name="Nagase T."/>
            <person name="Ishikawa K."/>
            <person name="Suyama M."/>
            <person name="Kikuno R."/>
            <person name="Miyajima N."/>
            <person name="Tanaka A."/>
            <person name="Kotani H."/>
            <person name="Nomura N."/>
            <person name="Ohara O."/>
        </authorList>
    </citation>
    <scope>NUCLEOTIDE SEQUENCE [LARGE SCALE MRNA] OF 470-1797 (ISOFORM 1)</scope>
    <scope>VARIANTS MET-659 AND GLY-1551</scope>
    <source>
        <tissue evidence="18">Brain</tissue>
    </source>
</reference>
<reference evidence="15 20" key="5">
    <citation type="submission" date="2004-01" db="EMBL/GenBank/DDBJ databases">
        <authorList>
            <person name="Ohara O."/>
            <person name="Suyama M."/>
            <person name="Nagase T."/>
            <person name="Ishikawa K."/>
            <person name="Kikuno R."/>
        </authorList>
    </citation>
    <scope>SEQUENCE REVISION TO C-TERMINUS</scope>
</reference>
<reference key="6">
    <citation type="journal article" date="2007" name="BMC Genomics">
        <title>The full-ORF clone resource of the German cDNA consortium.</title>
        <authorList>
            <person name="Bechtel S."/>
            <person name="Rosenfelder H."/>
            <person name="Duda A."/>
            <person name="Schmidt C.P."/>
            <person name="Ernst U."/>
            <person name="Wellenreuther R."/>
            <person name="Mehrle A."/>
            <person name="Schuster C."/>
            <person name="Bahr A."/>
            <person name="Bloecker H."/>
            <person name="Heubner D."/>
            <person name="Hoerlein A."/>
            <person name="Michel G."/>
            <person name="Wedler H."/>
            <person name="Koehrer K."/>
            <person name="Ottenwaelder B."/>
            <person name="Poustka A."/>
            <person name="Wiemann S."/>
            <person name="Schupp I."/>
        </authorList>
    </citation>
    <scope>NUCLEOTIDE SEQUENCE [LARGE SCALE MRNA] OF 833-1797 (ISOFORM 1)</scope>
    <source>
        <tissue>Testis</tissue>
    </source>
</reference>
<reference evidence="15" key="7">
    <citation type="journal article" date="1996" name="Biol. Reprod.">
        <title>Increased activity associated with the MAST205 protein kinase complex during mammalian spermiogenesis.</title>
        <authorList>
            <person name="Walden P.D."/>
            <person name="Millette C.F."/>
        </authorList>
    </citation>
    <scope>TISSUE SPECIFICITY</scope>
</reference>
<reference key="8">
    <citation type="journal article" date="2006" name="Cell">
        <title>Global, in vivo, and site-specific phosphorylation dynamics in signaling networks.</title>
        <authorList>
            <person name="Olsen J.V."/>
            <person name="Blagoev B."/>
            <person name="Gnad F."/>
            <person name="Macek B."/>
            <person name="Kumar C."/>
            <person name="Mortensen P."/>
            <person name="Mann M."/>
        </authorList>
    </citation>
    <scope>PHOSPHORYLATION [LARGE SCALE ANALYSIS] AT THR-1508</scope>
    <scope>IDENTIFICATION BY MASS SPECTROMETRY [LARGE SCALE ANALYSIS]</scope>
    <source>
        <tissue>Cervix carcinoma</tissue>
    </source>
</reference>
<reference key="9">
    <citation type="journal article" date="2008" name="Proc. Natl. Acad. Sci. U.S.A.">
        <title>A quantitative atlas of mitotic phosphorylation.</title>
        <authorList>
            <person name="Dephoure N."/>
            <person name="Zhou C."/>
            <person name="Villen J."/>
            <person name="Beausoleil S.A."/>
            <person name="Bakalarski C.E."/>
            <person name="Elledge S.J."/>
            <person name="Gygi S.P."/>
        </authorList>
    </citation>
    <scope>PHOSPHORYLATION [LARGE SCALE ANALYSIS] AT SER-74 AND SER-900</scope>
    <scope>IDENTIFICATION BY MASS SPECTROMETRY [LARGE SCALE ANALYSIS]</scope>
    <source>
        <tissue>Cervix carcinoma</tissue>
    </source>
</reference>
<reference key="10">
    <citation type="journal article" date="2009" name="Mol. Cell. Proteomics">
        <title>Large-scale proteomics analysis of the human kinome.</title>
        <authorList>
            <person name="Oppermann F.S."/>
            <person name="Gnad F."/>
            <person name="Olsen J.V."/>
            <person name="Hornberger R."/>
            <person name="Greff Z."/>
            <person name="Keri G."/>
            <person name="Mann M."/>
            <person name="Daub H."/>
        </authorList>
    </citation>
    <scope>PHOSPHORYLATION [LARGE SCALE ANALYSIS] AT SER-74</scope>
    <scope>IDENTIFICATION BY MASS SPECTROMETRY [LARGE SCALE ANALYSIS]</scope>
</reference>
<reference key="11">
    <citation type="journal article" date="2009" name="Sci. Signal.">
        <title>Quantitative phosphoproteomic analysis of T cell receptor signaling reveals system-wide modulation of protein-protein interactions.</title>
        <authorList>
            <person name="Mayya V."/>
            <person name="Lundgren D.H."/>
            <person name="Hwang S.-I."/>
            <person name="Rezaul K."/>
            <person name="Wu L."/>
            <person name="Eng J.K."/>
            <person name="Rodionov V."/>
            <person name="Han D.K."/>
        </authorList>
    </citation>
    <scope>PHOSPHORYLATION [LARGE SCALE ANALYSIS] AT SER-74 AND SER-148</scope>
    <scope>IDENTIFICATION BY MASS SPECTROMETRY [LARGE SCALE ANALYSIS]</scope>
    <source>
        <tissue>Leukemic T-cell</tissue>
    </source>
</reference>
<reference key="12">
    <citation type="journal article" date="2010" name="Sci. Signal.">
        <title>Quantitative phosphoproteomics reveals widespread full phosphorylation site occupancy during mitosis.</title>
        <authorList>
            <person name="Olsen J.V."/>
            <person name="Vermeulen M."/>
            <person name="Santamaria A."/>
            <person name="Kumar C."/>
            <person name="Miller M.L."/>
            <person name="Jensen L.J."/>
            <person name="Gnad F."/>
            <person name="Cox J."/>
            <person name="Jensen T.S."/>
            <person name="Nigg E.A."/>
            <person name="Brunak S."/>
            <person name="Mann M."/>
        </authorList>
    </citation>
    <scope>PHOSPHORYLATION [LARGE SCALE ANALYSIS] AT SER-74 AND SER-209</scope>
    <scope>IDENTIFICATION BY MASS SPECTROMETRY [LARGE SCALE ANALYSIS]</scope>
    <source>
        <tissue>Cervix carcinoma</tissue>
    </source>
</reference>
<reference key="13">
    <citation type="journal article" date="2011" name="Sci. Signal.">
        <title>System-wide temporal characterization of the proteome and phosphoproteome of human embryonic stem cell differentiation.</title>
        <authorList>
            <person name="Rigbolt K.T."/>
            <person name="Prokhorova T.A."/>
            <person name="Akimov V."/>
            <person name="Henningsen J."/>
            <person name="Johansen P.T."/>
            <person name="Kratchmarova I."/>
            <person name="Kassem M."/>
            <person name="Mann M."/>
            <person name="Olsen J.V."/>
            <person name="Blagoev B."/>
        </authorList>
    </citation>
    <scope>PHOSPHORYLATION [LARGE SCALE ANALYSIS] AT SER-148 AND SER-1032</scope>
    <scope>IDENTIFICATION BY MASS SPECTROMETRY [LARGE SCALE ANALYSIS]</scope>
</reference>
<reference key="14">
    <citation type="journal article" date="2013" name="J. Proteome Res.">
        <title>Toward a comprehensive characterization of a human cancer cell phosphoproteome.</title>
        <authorList>
            <person name="Zhou H."/>
            <person name="Di Palma S."/>
            <person name="Preisinger C."/>
            <person name="Peng M."/>
            <person name="Polat A.N."/>
            <person name="Heck A.J."/>
            <person name="Mohammed S."/>
        </authorList>
    </citation>
    <scope>PHOSPHORYLATION [LARGE SCALE ANALYSIS] AT SER-66; SER-74; SER-148; SER-209; SER-290; SER-876; SER-900; SER-1032; SER-1256; SER-1364 AND SER-1447</scope>
    <scope>IDENTIFICATION BY MASS SPECTROMETRY [LARGE SCALE ANALYSIS]</scope>
    <source>
        <tissue>Cervix carcinoma</tissue>
        <tissue>Erythroleukemia</tissue>
    </source>
</reference>
<reference key="15">
    <citation type="journal article" date="2014" name="J. Proteomics">
        <title>An enzyme assisted RP-RPLC approach for in-depth analysis of human liver phosphoproteome.</title>
        <authorList>
            <person name="Bian Y."/>
            <person name="Song C."/>
            <person name="Cheng K."/>
            <person name="Dong M."/>
            <person name="Wang F."/>
            <person name="Huang J."/>
            <person name="Sun D."/>
            <person name="Wang L."/>
            <person name="Ye M."/>
            <person name="Zou H."/>
        </authorList>
    </citation>
    <scope>PHOSPHORYLATION [LARGE SCALE ANALYSIS] AT SER-874</scope>
    <scope>IDENTIFICATION BY MASS SPECTROMETRY [LARGE SCALE ANALYSIS]</scope>
    <source>
        <tissue>Liver</tissue>
    </source>
</reference>
<reference key="16">
    <citation type="journal article" date="2014" name="Mol. Cell. Proteomics">
        <title>Immunoaffinity enrichment and mass spectrometry analysis of protein methylation.</title>
        <authorList>
            <person name="Guo A."/>
            <person name="Gu H."/>
            <person name="Zhou J."/>
            <person name="Mulhern D."/>
            <person name="Wang Y."/>
            <person name="Lee K.A."/>
            <person name="Yang V."/>
            <person name="Aguiar M."/>
            <person name="Kornhauser J."/>
            <person name="Jia X."/>
            <person name="Ren J."/>
            <person name="Beausoleil S.A."/>
            <person name="Silva J.C."/>
            <person name="Vemulapalli V."/>
            <person name="Bedford M.T."/>
            <person name="Comb M.J."/>
        </authorList>
    </citation>
    <scope>METHYLATION [LARGE SCALE ANALYSIS] AT ARG-1004</scope>
    <scope>IDENTIFICATION BY MASS SPECTROMETRY [LARGE SCALE ANALYSIS]</scope>
    <source>
        <tissue>Colon carcinoma</tissue>
    </source>
</reference>
<reference key="17">
    <citation type="journal article" date="2007" name="Nature">
        <title>Patterns of somatic mutation in human cancer genomes.</title>
        <authorList>
            <person name="Greenman C."/>
            <person name="Stephens P."/>
            <person name="Smith R."/>
            <person name="Dalgliesh G.L."/>
            <person name="Hunter C."/>
            <person name="Bignell G."/>
            <person name="Davies H."/>
            <person name="Teague J."/>
            <person name="Butler A."/>
            <person name="Stevens C."/>
            <person name="Edkins S."/>
            <person name="O'Meara S."/>
            <person name="Vastrik I."/>
            <person name="Schmidt E.E."/>
            <person name="Avis T."/>
            <person name="Barthorpe S."/>
            <person name="Bhamra G."/>
            <person name="Buck G."/>
            <person name="Choudhury B."/>
            <person name="Clements J."/>
            <person name="Cole J."/>
            <person name="Dicks E."/>
            <person name="Forbes S."/>
            <person name="Gray K."/>
            <person name="Halliday K."/>
            <person name="Harrison R."/>
            <person name="Hills K."/>
            <person name="Hinton J."/>
            <person name="Jenkinson A."/>
            <person name="Jones D."/>
            <person name="Menzies A."/>
            <person name="Mironenko T."/>
            <person name="Perry J."/>
            <person name="Raine K."/>
            <person name="Richardson D."/>
            <person name="Shepherd R."/>
            <person name="Small A."/>
            <person name="Tofts C."/>
            <person name="Varian J."/>
            <person name="Webb T."/>
            <person name="West S."/>
            <person name="Widaa S."/>
            <person name="Yates A."/>
            <person name="Cahill D.P."/>
            <person name="Louis D.N."/>
            <person name="Goldstraw P."/>
            <person name="Nicholson A.G."/>
            <person name="Brasseur F."/>
            <person name="Looijenga L."/>
            <person name="Weber B.L."/>
            <person name="Chiew Y.-E."/>
            <person name="DeFazio A."/>
            <person name="Greaves M.F."/>
            <person name="Green A.R."/>
            <person name="Campbell P."/>
            <person name="Birney E."/>
            <person name="Easton D.F."/>
            <person name="Chenevix-Trench G."/>
            <person name="Tan M.-H."/>
            <person name="Khoo S.K."/>
            <person name="Teh B.T."/>
            <person name="Yuen S.T."/>
            <person name="Leung S.Y."/>
            <person name="Wooster R."/>
            <person name="Futreal P.A."/>
            <person name="Stratton M.R."/>
        </authorList>
    </citation>
    <scope>VARIANTS [LARGE SCALE ANALYSIS] PHE-69; GLU-275; GLU-388; ALA-655; MET-659; LEU-991; ARG-1197; GLU-1221; LEU-1246; MET-1304; THR-1463; ALA-1468; GLY-1551; ARG-1673 AND GLU-1703</scope>
</reference>
<organism>
    <name type="scientific">Homo sapiens</name>
    <name type="common">Human</name>
    <dbReference type="NCBI Taxonomy" id="9606"/>
    <lineage>
        <taxon>Eukaryota</taxon>
        <taxon>Metazoa</taxon>
        <taxon>Chordata</taxon>
        <taxon>Craniata</taxon>
        <taxon>Vertebrata</taxon>
        <taxon>Euteleostomi</taxon>
        <taxon>Mammalia</taxon>
        <taxon>Eutheria</taxon>
        <taxon>Euarchontoglires</taxon>
        <taxon>Primates</taxon>
        <taxon>Haplorrhini</taxon>
        <taxon>Catarrhini</taxon>
        <taxon>Hominidae</taxon>
        <taxon>Homo</taxon>
    </lineage>
</organism>
<gene>
    <name evidence="21" type="primary">MAST2</name>
    <name evidence="18" type="synonym">KIAA0807</name>
    <name evidence="19" type="synonym">MAST205</name>
</gene>
<comment type="function">
    <text evidence="1">Appears to link the dystrophin/utrophin network with microtubule filaments via the syntrophins. Phosphorylation of DMD or UTRN may modulate their affinities for associated proteins. Functions in a multi-protein complex in spermatid maturation. Regulates lipopolysaccharide-induced IL-12 synthesis in macrophages by forming a complex with TRAF6, resulting in the inhibition of TRAF6 NF-kappa-B activation (By similarity).</text>
</comment>
<comment type="catalytic activity">
    <reaction evidence="2">
        <text>L-seryl-[protein] + ATP = O-phospho-L-seryl-[protein] + ADP + H(+)</text>
        <dbReference type="Rhea" id="RHEA:17989"/>
        <dbReference type="Rhea" id="RHEA-COMP:9863"/>
        <dbReference type="Rhea" id="RHEA-COMP:11604"/>
        <dbReference type="ChEBI" id="CHEBI:15378"/>
        <dbReference type="ChEBI" id="CHEBI:29999"/>
        <dbReference type="ChEBI" id="CHEBI:30616"/>
        <dbReference type="ChEBI" id="CHEBI:83421"/>
        <dbReference type="ChEBI" id="CHEBI:456216"/>
        <dbReference type="EC" id="2.7.11.1"/>
    </reaction>
</comment>
<comment type="catalytic activity">
    <reaction evidence="2">
        <text>L-threonyl-[protein] + ATP = O-phospho-L-threonyl-[protein] + ADP + H(+)</text>
        <dbReference type="Rhea" id="RHEA:46608"/>
        <dbReference type="Rhea" id="RHEA-COMP:11060"/>
        <dbReference type="Rhea" id="RHEA-COMP:11605"/>
        <dbReference type="ChEBI" id="CHEBI:15378"/>
        <dbReference type="ChEBI" id="CHEBI:30013"/>
        <dbReference type="ChEBI" id="CHEBI:30616"/>
        <dbReference type="ChEBI" id="CHEBI:61977"/>
        <dbReference type="ChEBI" id="CHEBI:456216"/>
        <dbReference type="EC" id="2.7.11.1"/>
    </reaction>
</comment>
<comment type="cofactor">
    <cofactor evidence="2">
        <name>Mg(2+)</name>
        <dbReference type="ChEBI" id="CHEBI:18420"/>
    </cofactor>
</comment>
<comment type="subunit">
    <text evidence="9">Interacts with CDHR2.</text>
</comment>
<comment type="interaction">
    <interactant intactId="EBI-493777">
        <id>Q6P0Q8</id>
    </interactant>
    <interactant intactId="EBI-493793">
        <id>Q9BYE9</id>
        <label>CDHR2</label>
    </interactant>
    <organismsDiffer>false</organismsDiffer>
    <experiments>4</experiments>
</comment>
<comment type="interaction">
    <interactant intactId="EBI-493777">
        <id>Q6P0Q8</id>
    </interactant>
    <interactant intactId="EBI-7816923">
        <id>P48764</id>
        <label>SLC9A3</label>
    </interactant>
    <organismsDiffer>false</organismsDiffer>
    <experiments>2</experiments>
</comment>
<comment type="interaction">
    <interactant intactId="EBI-493777">
        <id>Q6P0Q8</id>
    </interactant>
    <interactant intactId="EBI-356498">
        <id>P62258</id>
        <label>YWHAE</label>
    </interactant>
    <organismsDiffer>false</organismsDiffer>
    <experiments>4</experiments>
</comment>
<comment type="interaction">
    <interactant intactId="EBI-493777">
        <id>Q6P0Q8</id>
    </interactant>
    <interactant intactId="EBI-7817027">
        <id>Q28362</id>
        <label>SLC9A3</label>
    </interactant>
    <organismsDiffer>true</organismsDiffer>
    <experiments>2</experiments>
</comment>
<comment type="subcellular location">
    <subcellularLocation>
        <location evidence="9">Cytoplasm</location>
        <location evidence="9">Cytoskeleton</location>
    </subcellularLocation>
    <subcellularLocation>
        <location evidence="15">Cell membrane</location>
        <topology evidence="15">Peripheral membrane protein</topology>
        <orientation evidence="15">Cytoplasmic side</orientation>
    </subcellularLocation>
    <text>Recruited to the sub-membranous area on interaction with CDHR2.</text>
</comment>
<comment type="alternative products">
    <event type="alternative splicing"/>
    <isoform>
        <id>Q6P0Q8-1</id>
        <name evidence="9">1</name>
        <sequence type="displayed"/>
    </isoform>
    <isoform>
        <id>Q6P0Q8-2</id>
        <name evidence="15">2</name>
        <sequence type="described" ref="VSP_051698 VSP_051699 VSP_051700"/>
    </isoform>
</comment>
<comment type="tissue specificity">
    <text evidence="12">Abundant in the testis.</text>
</comment>
<comment type="PTM">
    <text evidence="2">Phosphorylated and ubiquitinated. N-terminal ubiquitination leads to degradation of MAST2 by proteasome-mediated proteolysis. N-terminal phosphorylation appears to be a prerequisite for ubiquitination (By similarity).</text>
</comment>
<comment type="similarity">
    <text evidence="15">Belongs to the protein kinase superfamily. AGC Ser/Thr protein kinase family.</text>
</comment>
<comment type="sequence caution" evidence="15">
    <conflict type="erroneous initiation">
        <sequence resource="EMBL-CDS" id="AAH15816"/>
    </conflict>
</comment>
<comment type="sequence caution" evidence="15">
    <conflict type="frameshift">
        <sequence resource="EMBL-CDS" id="AAH15816"/>
    </conflict>
</comment>
<comment type="sequence caution" evidence="15">
    <conflict type="frameshift">
        <sequence resource="EMBL-CDS" id="BAB40778"/>
    </conflict>
</comment>
<comment type="sequence caution" evidence="15">
    <conflict type="erroneous gene model prediction">
        <sequence resource="EMBL-CDS" id="CAH73245"/>
    </conflict>
</comment>
<comment type="sequence caution" evidence="15">
    <conflict type="erroneous gene model prediction">
        <sequence resource="EMBL-CDS" id="CAI16563"/>
    </conflict>
</comment>
<comment type="sequence caution" evidence="15">
    <conflict type="erroneous gene model prediction">
        <sequence resource="EMBL-CDS" id="CAI21706"/>
    </conflict>
</comment>
<sequence length="1798" mass="196436">MKRSRCRDRPQPPPPDRREDGVQRAAELSQSLPPRRRAPPGRQRLEERTGPAGPEGKEQDVVTGVSPLLFRKLSNPDIFSSTGKVKLQRQLSQDDCKLWRGNLASSLSGKQLLPLSSSVHSSVGQVTWQSSGEASNLVRMRNQSLGQSAPSLTAGLKELSLPRRGSFCRTSNRKSLIVTSSTSPTLPRPHSPLHGHTGNSPLDSPRNFSPNAPAHFSFVPARRTDGRRWSLASLPSSGYGTNTPSSTVSSSCSSQEKLHQLPFQPTADELHFLTKHFSTESVPDEEGRQSPAMRPRSRSLSPGRSPVSFDSEIIMMNHVYKERFPKATAQMEERLAEFISSNTPDSVLPLADGALSFIHHQVIEMARDCLDKSRSGLITSQYFYELQDNLEKLLQDAHERSESSEVAFVMQLVKKLMIIIARPARLLECLEFDPEEFYHLLEAAEGHAKEGQGIKCDIPRYIVSQLGLTRDPLEEMAQLSSCDSPDTPETDDSIEGHGASLPSKKTPSEEDFETIKLISNGAYGAVFLVRHKSTRQRFAMKKINKQNLILRNQIQQAFVERDILTFAENPFVVSMFCSFDTKRHLCMVMEYVEGGDCATLLKNIGALPVDMVRLYFAETVLALEYLHNYGIVHRDLKPDNLLITSMGHIKLTDFGLSKIGLMSLTTNLYEGHIEKDAREFLDKQVCGTPEYIAPEVILRQGYGKPVDWWAMGIILYEFLVGCVPFFGDTPEELFGQVISDEIVWPEGDEALPPDAQDLTSKLLHQNPLERLGTGSAYEVKQHPFFTGLDWTGLLRQKAEFIPQLESEDDTSYFDTRSERYHHMDSEDEEEVSEDGCLEIRQFSSCSPRFNKVYSSMERLSLLEERRTPPPTKRSLSEEKEDHSDGLAGLKGRDRSWVIGSPEILRKRLSVSESSHTESDSSPPMTVRRRCSGLLDAPRFPEGPEEASSTLRRQPQEGIWVLTPPSGEGVSGPVTEHSGEQRPKLDEEAVGRSSGSSPAMETRGRGTSQLAEGATAKAISDLAVRRARHRLLSGDSTEKRTARPVNKVIKSASATALSLLIPSEHHTCSPLASPMSPHSQSSNPSSRDSSPSRDFLPALGSMRPPIIIHRAGKKYGFTLRAIRVYMGDSDVYTVHHMVWHVEDGGPASEAGLRQGDLITHVNGEPVHGLVHTEVVELILKSGNKVAISTTPLENTSIKVGPARKGSYKAKMARRSKRSRGKDGQESRKRSSLFRKITKQASLLHTSRSLSSLNRSLSSGESGPGSPTHSHSLSPRSPTQGYRVTPDAVHSVGGNSSQSSSPSSSVPSSPAGSGHTRPSSLHGLAPKLQRQYRSPRRKSAGSIPLSPLAHTPSPPPPTASPQRSPSPLSGHVAQAFPTKLHLSPPLGRQLSRPKSAEPPRSPLLKRVQSAEKLAAALAASEKKLATSRKHSLDLPHSELKKELPPREVSPLEVVGARSVLSGKGALPGKGVLQPAPSRALGTLRQDRAERRESLQKQEAIREVDSSEDDTEEGPENSQGAQELSLAPHPEVSQSVAPKGAGESGEEDPFPSRDPRSLGPMVPSLLTGITLGPPRMESPSGPHRRLGSPQAIEEAASSSSAGPNLGQSGATDPIPPEGCWKAQHLHTQALTALSPSTSGLTPTSSCSPPSSTSGKLSMWSWKSLIEGPDRASPSRKATMAGGLANLQDLENTTPAQPKNLSPREQGKTQPPSAPRLAHPSYEDPSQGWLWESECAQAVKEDPALSITQVPDASGDRRQDVPCRGCPLTQKSEPSLRRGQEPGGHQKHRDLALVPDELLKQT</sequence>
<evidence type="ECO:0000250" key="1"/>
<evidence type="ECO:0000250" key="2">
    <source>
        <dbReference type="UniProtKB" id="Q60592"/>
    </source>
</evidence>
<evidence type="ECO:0000250" key="3">
    <source>
        <dbReference type="UniProtKB" id="Q9BXM7"/>
    </source>
</evidence>
<evidence type="ECO:0000255" key="4">
    <source>
        <dbReference type="PROSITE-ProRule" id="PRU00143"/>
    </source>
</evidence>
<evidence type="ECO:0000255" key="5">
    <source>
        <dbReference type="PROSITE-ProRule" id="PRU00159"/>
    </source>
</evidence>
<evidence type="ECO:0000255" key="6">
    <source>
        <dbReference type="PROSITE-ProRule" id="PRU00618"/>
    </source>
</evidence>
<evidence type="ECO:0000255" key="7">
    <source>
        <dbReference type="PROSITE-ProRule" id="PRU10027"/>
    </source>
</evidence>
<evidence type="ECO:0000256" key="8">
    <source>
        <dbReference type="SAM" id="MobiDB-lite"/>
    </source>
</evidence>
<evidence type="ECO:0000269" key="9">
    <source>
    </source>
</evidence>
<evidence type="ECO:0000269" key="10">
    <source>
    </source>
</evidence>
<evidence type="ECO:0000269" key="11">
    <source>
    </source>
</evidence>
<evidence type="ECO:0000269" key="12">
    <source>
    </source>
</evidence>
<evidence type="ECO:0000269" key="13">
    <source>
    </source>
</evidence>
<evidence type="ECO:0000303" key="14">
    <source>
    </source>
</evidence>
<evidence type="ECO:0000305" key="15"/>
<evidence type="ECO:0000312" key="16">
    <source>
        <dbReference type="EMBL" id="AAH15816.2"/>
    </source>
</evidence>
<evidence type="ECO:0000312" key="17">
    <source>
        <dbReference type="EMBL" id="AAH65499.1"/>
    </source>
</evidence>
<evidence type="ECO:0000312" key="18">
    <source>
        <dbReference type="EMBL" id="BAA34527.2"/>
    </source>
</evidence>
<evidence type="ECO:0000312" key="19">
    <source>
        <dbReference type="EMBL" id="BAB40778.1"/>
    </source>
</evidence>
<evidence type="ECO:0000312" key="20">
    <source>
        <dbReference type="EMBL" id="CAH73244.1"/>
    </source>
</evidence>
<evidence type="ECO:0000312" key="21">
    <source>
        <dbReference type="EMBL" id="CAH73245.1"/>
    </source>
</evidence>
<evidence type="ECO:0007744" key="22">
    <source>
    </source>
</evidence>
<evidence type="ECO:0007744" key="23">
    <source>
    </source>
</evidence>
<evidence type="ECO:0007744" key="24">
    <source>
    </source>
</evidence>
<evidence type="ECO:0007744" key="25">
    <source>
    </source>
</evidence>
<evidence type="ECO:0007744" key="26">
    <source>
    </source>
</evidence>
<evidence type="ECO:0007744" key="27">
    <source>
    </source>
</evidence>
<evidence type="ECO:0007744" key="28">
    <source>
    </source>
</evidence>
<evidence type="ECO:0007744" key="29">
    <source>
    </source>
</evidence>
<evidence type="ECO:0007744" key="30">
    <source>
    </source>
</evidence>
<evidence type="ECO:0007829" key="31">
    <source>
        <dbReference type="PDB" id="2KQF"/>
    </source>
</evidence>
<dbReference type="EC" id="2.7.11.1"/>
<dbReference type="EMBL" id="AB047005">
    <property type="protein sequence ID" value="BAB40778.1"/>
    <property type="status" value="ALT_FRAME"/>
    <property type="molecule type" value="mRNA"/>
</dbReference>
<dbReference type="EMBL" id="AL645480">
    <property type="protein sequence ID" value="CAH73244.1"/>
    <property type="molecule type" value="Genomic_DNA"/>
</dbReference>
<dbReference type="EMBL" id="AL358075">
    <property type="protein sequence ID" value="CAH73244.1"/>
    <property type="status" value="JOINED"/>
    <property type="molecule type" value="Genomic_DNA"/>
</dbReference>
<dbReference type="EMBL" id="AL603882">
    <property type="protein sequence ID" value="CAH73244.1"/>
    <property type="status" value="JOINED"/>
    <property type="molecule type" value="Genomic_DNA"/>
</dbReference>
<dbReference type="EMBL" id="AL603888">
    <property type="protein sequence ID" value="CAH73244.1"/>
    <property type="status" value="JOINED"/>
    <property type="molecule type" value="Genomic_DNA"/>
</dbReference>
<dbReference type="EMBL" id="AL645480">
    <property type="protein sequence ID" value="CAH73245.1"/>
    <property type="status" value="ALT_SEQ"/>
    <property type="molecule type" value="Genomic_DNA"/>
</dbReference>
<dbReference type="EMBL" id="AL358075">
    <property type="protein sequence ID" value="CAH73245.1"/>
    <property type="status" value="JOINED"/>
    <property type="molecule type" value="Genomic_DNA"/>
</dbReference>
<dbReference type="EMBL" id="AL603888">
    <property type="protein sequence ID" value="CAH73245.1"/>
    <property type="status" value="JOINED"/>
    <property type="molecule type" value="Genomic_DNA"/>
</dbReference>
<dbReference type="EMBL" id="AL603882">
    <property type="protein sequence ID" value="CAI16217.1"/>
    <property type="molecule type" value="Genomic_DNA"/>
</dbReference>
<dbReference type="EMBL" id="AL358075">
    <property type="protein sequence ID" value="CAI16217.1"/>
    <property type="status" value="JOINED"/>
    <property type="molecule type" value="Genomic_DNA"/>
</dbReference>
<dbReference type="EMBL" id="AL603888">
    <property type="protein sequence ID" value="CAI16217.1"/>
    <property type="status" value="JOINED"/>
    <property type="molecule type" value="Genomic_DNA"/>
</dbReference>
<dbReference type="EMBL" id="AL645480">
    <property type="protein sequence ID" value="CAI16217.1"/>
    <property type="status" value="JOINED"/>
    <property type="molecule type" value="Genomic_DNA"/>
</dbReference>
<dbReference type="EMBL" id="AL603888">
    <property type="protein sequence ID" value="CAI16562.1"/>
    <property type="molecule type" value="Genomic_DNA"/>
</dbReference>
<dbReference type="EMBL" id="AL358075">
    <property type="protein sequence ID" value="CAI16562.1"/>
    <property type="status" value="JOINED"/>
    <property type="molecule type" value="Genomic_DNA"/>
</dbReference>
<dbReference type="EMBL" id="AL603882">
    <property type="protein sequence ID" value="CAI16562.1"/>
    <property type="status" value="JOINED"/>
    <property type="molecule type" value="Genomic_DNA"/>
</dbReference>
<dbReference type="EMBL" id="AL645480">
    <property type="protein sequence ID" value="CAI16562.1"/>
    <property type="status" value="JOINED"/>
    <property type="molecule type" value="Genomic_DNA"/>
</dbReference>
<dbReference type="EMBL" id="AL603888">
    <property type="protein sequence ID" value="CAI16563.1"/>
    <property type="status" value="ALT_SEQ"/>
    <property type="molecule type" value="Genomic_DNA"/>
</dbReference>
<dbReference type="EMBL" id="AL358075">
    <property type="protein sequence ID" value="CAI16563.1"/>
    <property type="status" value="JOINED"/>
    <property type="molecule type" value="Genomic_DNA"/>
</dbReference>
<dbReference type="EMBL" id="AL645480">
    <property type="protein sequence ID" value="CAI16563.1"/>
    <property type="status" value="JOINED"/>
    <property type="molecule type" value="Genomic_DNA"/>
</dbReference>
<dbReference type="EMBL" id="AL358075">
    <property type="protein sequence ID" value="CAI21705.1"/>
    <property type="molecule type" value="Genomic_DNA"/>
</dbReference>
<dbReference type="EMBL" id="AL603882">
    <property type="protein sequence ID" value="CAI21705.1"/>
    <property type="status" value="JOINED"/>
    <property type="molecule type" value="Genomic_DNA"/>
</dbReference>
<dbReference type="EMBL" id="AL603888">
    <property type="protein sequence ID" value="CAI21705.1"/>
    <property type="status" value="JOINED"/>
    <property type="molecule type" value="Genomic_DNA"/>
</dbReference>
<dbReference type="EMBL" id="AL645480">
    <property type="protein sequence ID" value="CAI21705.1"/>
    <property type="status" value="JOINED"/>
    <property type="molecule type" value="Genomic_DNA"/>
</dbReference>
<dbReference type="EMBL" id="AL358075">
    <property type="protein sequence ID" value="CAI21706.1"/>
    <property type="status" value="ALT_SEQ"/>
    <property type="molecule type" value="Genomic_DNA"/>
</dbReference>
<dbReference type="EMBL" id="AL603888">
    <property type="protein sequence ID" value="CAI21706.1"/>
    <property type="status" value="JOINED"/>
    <property type="molecule type" value="Genomic_DNA"/>
</dbReference>
<dbReference type="EMBL" id="AL645480">
    <property type="protein sequence ID" value="CAI21706.1"/>
    <property type="status" value="JOINED"/>
    <property type="molecule type" value="Genomic_DNA"/>
</dbReference>
<dbReference type="EMBL" id="BC015816">
    <property type="protein sequence ID" value="AAH15816.2"/>
    <property type="status" value="ALT_INIT"/>
    <property type="molecule type" value="mRNA"/>
</dbReference>
<dbReference type="EMBL" id="BC065499">
    <property type="protein sequence ID" value="AAH65499.1"/>
    <property type="molecule type" value="mRNA"/>
</dbReference>
<dbReference type="EMBL" id="AB018350">
    <property type="protein sequence ID" value="BAA34527.2"/>
    <property type="molecule type" value="mRNA"/>
</dbReference>
<dbReference type="EMBL" id="AL833919">
    <property type="protein sequence ID" value="CAD38775.1"/>
    <property type="molecule type" value="mRNA"/>
</dbReference>
<dbReference type="CCDS" id="CCDS41326.1">
    <molecule id="Q6P0Q8-1"/>
</dbReference>
<dbReference type="RefSeq" id="NP_001306174.1">
    <property type="nucleotide sequence ID" value="NM_001319245.1"/>
</dbReference>
<dbReference type="RefSeq" id="NP_055927.2">
    <molecule id="Q6P0Q8-1"/>
    <property type="nucleotide sequence ID" value="NM_015112.3"/>
</dbReference>
<dbReference type="PDB" id="2KQF">
    <property type="method" value="NMR"/>
    <property type="chains" value="A=1099-1193"/>
</dbReference>
<dbReference type="PDB" id="2KYL">
    <property type="method" value="NMR"/>
    <property type="chains" value="A=1099-1193"/>
</dbReference>
<dbReference type="PDBsum" id="2KQF"/>
<dbReference type="PDBsum" id="2KYL"/>
<dbReference type="BMRB" id="Q6P0Q8"/>
<dbReference type="SMR" id="Q6P0Q8"/>
<dbReference type="BioGRID" id="116756">
    <property type="interactions" value="55"/>
</dbReference>
<dbReference type="ELM" id="Q6P0Q8"/>
<dbReference type="FunCoup" id="Q6P0Q8">
    <property type="interactions" value="258"/>
</dbReference>
<dbReference type="IntAct" id="Q6P0Q8">
    <property type="interactions" value="31"/>
</dbReference>
<dbReference type="MINT" id="Q6P0Q8"/>
<dbReference type="STRING" id="9606.ENSP00000354671"/>
<dbReference type="ChEMBL" id="CHEMBL2417355"/>
<dbReference type="GlyGen" id="Q6P0Q8">
    <property type="glycosylation" value="2 sites, 1 N-linked glycan (1 site)"/>
</dbReference>
<dbReference type="iPTMnet" id="Q6P0Q8"/>
<dbReference type="PhosphoSitePlus" id="Q6P0Q8"/>
<dbReference type="BioMuta" id="MAST2"/>
<dbReference type="DMDM" id="62287152"/>
<dbReference type="CPTAC" id="non-CPTAC-5658"/>
<dbReference type="CPTAC" id="non-CPTAC-5659"/>
<dbReference type="jPOST" id="Q6P0Q8"/>
<dbReference type="MassIVE" id="Q6P0Q8"/>
<dbReference type="PaxDb" id="9606-ENSP00000354671"/>
<dbReference type="PeptideAtlas" id="Q6P0Q8"/>
<dbReference type="ProteomicsDB" id="66816">
    <molecule id="Q6P0Q8-1"/>
</dbReference>
<dbReference type="ProteomicsDB" id="66817">
    <molecule id="Q6P0Q8-2"/>
</dbReference>
<dbReference type="Pumba" id="Q6P0Q8"/>
<dbReference type="Antibodypedia" id="32722">
    <property type="antibodies" value="177 antibodies from 20 providers"/>
</dbReference>
<dbReference type="DNASU" id="23139"/>
<dbReference type="Ensembl" id="ENST00000361297.7">
    <molecule id="Q6P0Q8-1"/>
    <property type="protein sequence ID" value="ENSP00000354671.2"/>
    <property type="gene ID" value="ENSG00000086015.23"/>
</dbReference>
<dbReference type="GeneID" id="23139"/>
<dbReference type="KEGG" id="hsa:23139"/>
<dbReference type="MANE-Select" id="ENST00000361297.7">
    <property type="protein sequence ID" value="ENSP00000354671.2"/>
    <property type="RefSeq nucleotide sequence ID" value="NM_015112.3"/>
    <property type="RefSeq protein sequence ID" value="NP_055927.2"/>
</dbReference>
<dbReference type="UCSC" id="uc001cov.3">
    <molecule id="Q6P0Q8-1"/>
    <property type="organism name" value="human"/>
</dbReference>
<dbReference type="AGR" id="HGNC:19035"/>
<dbReference type="CTD" id="23139"/>
<dbReference type="DisGeNET" id="23139"/>
<dbReference type="GeneCards" id="MAST2"/>
<dbReference type="HGNC" id="HGNC:19035">
    <property type="gene designation" value="MAST2"/>
</dbReference>
<dbReference type="HPA" id="ENSG00000086015">
    <property type="expression patterns" value="Tissue enhanced (skeletal)"/>
</dbReference>
<dbReference type="MalaCards" id="MAST2"/>
<dbReference type="MIM" id="612257">
    <property type="type" value="gene"/>
</dbReference>
<dbReference type="neXtProt" id="NX_Q6P0Q8"/>
<dbReference type="OpenTargets" id="ENSG00000086015"/>
<dbReference type="PharmGKB" id="PA134954073"/>
<dbReference type="VEuPathDB" id="HostDB:ENSG00000086015"/>
<dbReference type="eggNOG" id="KOG0606">
    <property type="taxonomic scope" value="Eukaryota"/>
</dbReference>
<dbReference type="GeneTree" id="ENSGT00940000155705"/>
<dbReference type="HOGENOM" id="CLU_000288_9_2_1"/>
<dbReference type="InParanoid" id="Q6P0Q8"/>
<dbReference type="OMA" id="PHNIPPG"/>
<dbReference type="OrthoDB" id="10070999at2759"/>
<dbReference type="PAN-GO" id="Q6P0Q8">
    <property type="GO annotations" value="6 GO annotations based on evolutionary models"/>
</dbReference>
<dbReference type="PhylomeDB" id="Q6P0Q8"/>
<dbReference type="TreeFam" id="TF313149"/>
<dbReference type="PathwayCommons" id="Q6P0Q8"/>
<dbReference type="SignaLink" id="Q6P0Q8"/>
<dbReference type="SIGNOR" id="Q6P0Q8"/>
<dbReference type="BioGRID-ORCS" id="23139">
    <property type="hits" value="29 hits in 1212 CRISPR screens"/>
</dbReference>
<dbReference type="ChiTaRS" id="MAST2">
    <property type="organism name" value="human"/>
</dbReference>
<dbReference type="EvolutionaryTrace" id="Q6P0Q8"/>
<dbReference type="GeneWiki" id="MAST2"/>
<dbReference type="GenomeRNAi" id="23139"/>
<dbReference type="Pharos" id="Q6P0Q8">
    <property type="development level" value="Tbio"/>
</dbReference>
<dbReference type="PRO" id="PR:Q6P0Q8"/>
<dbReference type="Proteomes" id="UP000005640">
    <property type="component" value="Chromosome 1"/>
</dbReference>
<dbReference type="RNAct" id="Q6P0Q8">
    <property type="molecule type" value="protein"/>
</dbReference>
<dbReference type="Bgee" id="ENSG00000086015">
    <property type="expression patterns" value="Expressed in gastrocnemius and 205 other cell types or tissues"/>
</dbReference>
<dbReference type="ExpressionAtlas" id="Q6P0Q8">
    <property type="expression patterns" value="baseline and differential"/>
</dbReference>
<dbReference type="GO" id="GO:0005737">
    <property type="term" value="C:cytoplasm"/>
    <property type="evidence" value="ECO:0007669"/>
    <property type="project" value="UniProtKB-KW"/>
</dbReference>
<dbReference type="GO" id="GO:0015630">
    <property type="term" value="C:microtubule cytoskeleton"/>
    <property type="evidence" value="ECO:0000318"/>
    <property type="project" value="GO_Central"/>
</dbReference>
<dbReference type="GO" id="GO:0005886">
    <property type="term" value="C:plasma membrane"/>
    <property type="evidence" value="ECO:0007669"/>
    <property type="project" value="UniProtKB-SubCell"/>
</dbReference>
<dbReference type="GO" id="GO:0005524">
    <property type="term" value="F:ATP binding"/>
    <property type="evidence" value="ECO:0000250"/>
    <property type="project" value="UniProtKB"/>
</dbReference>
<dbReference type="GO" id="GO:0000287">
    <property type="term" value="F:magnesium ion binding"/>
    <property type="evidence" value="ECO:0000250"/>
    <property type="project" value="UniProtKB"/>
</dbReference>
<dbReference type="GO" id="GO:0008017">
    <property type="term" value="F:microtubule binding"/>
    <property type="evidence" value="ECO:0000318"/>
    <property type="project" value="GO_Central"/>
</dbReference>
<dbReference type="GO" id="GO:0019902">
    <property type="term" value="F:phosphatase binding"/>
    <property type="evidence" value="ECO:0000353"/>
    <property type="project" value="UniProtKB"/>
</dbReference>
<dbReference type="GO" id="GO:0106310">
    <property type="term" value="F:protein serine kinase activity"/>
    <property type="evidence" value="ECO:0007669"/>
    <property type="project" value="RHEA"/>
</dbReference>
<dbReference type="GO" id="GO:0004674">
    <property type="term" value="F:protein serine/threonine kinase activity"/>
    <property type="evidence" value="ECO:0000318"/>
    <property type="project" value="GO_Central"/>
</dbReference>
<dbReference type="GO" id="GO:0007010">
    <property type="term" value="P:cytoskeleton organization"/>
    <property type="evidence" value="ECO:0000318"/>
    <property type="project" value="GO_Central"/>
</dbReference>
<dbReference type="GO" id="GO:0035556">
    <property type="term" value="P:intracellular signal transduction"/>
    <property type="evidence" value="ECO:0000318"/>
    <property type="project" value="GO_Central"/>
</dbReference>
<dbReference type="GO" id="GO:0006468">
    <property type="term" value="P:protein phosphorylation"/>
    <property type="evidence" value="ECO:0000250"/>
    <property type="project" value="UniProtKB"/>
</dbReference>
<dbReference type="GO" id="GO:0032655">
    <property type="term" value="P:regulation of interleukin-12 production"/>
    <property type="evidence" value="ECO:0000250"/>
    <property type="project" value="UniProtKB"/>
</dbReference>
<dbReference type="GO" id="GO:0048515">
    <property type="term" value="P:spermatid differentiation"/>
    <property type="evidence" value="ECO:0000250"/>
    <property type="project" value="UniProtKB"/>
</dbReference>
<dbReference type="CDD" id="cd23074">
    <property type="entry name" value="PDZ_MAST2"/>
    <property type="match status" value="1"/>
</dbReference>
<dbReference type="CDD" id="cd05609">
    <property type="entry name" value="STKc_MAST"/>
    <property type="match status" value="1"/>
</dbReference>
<dbReference type="FunFam" id="1.10.510.10:FF:000012">
    <property type="entry name" value="microtubule-associated serine/threonine-protein kinase 2 isoform X1"/>
    <property type="match status" value="1"/>
</dbReference>
<dbReference type="FunFam" id="3.30.200.20:FF:000012">
    <property type="entry name" value="microtubule-associated serine/threonine-protein kinase 2 isoform X1"/>
    <property type="match status" value="1"/>
</dbReference>
<dbReference type="FunFam" id="1.20.1480.20:FF:000001">
    <property type="entry name" value="microtubule-associated serine/threonine-protein kinase 4 isoform X1"/>
    <property type="match status" value="1"/>
</dbReference>
<dbReference type="FunFam" id="2.30.42.10:FF:000008">
    <property type="entry name" value="microtubule-associated serine/threonine-protein kinase 4 isoform X2"/>
    <property type="match status" value="1"/>
</dbReference>
<dbReference type="Gene3D" id="2.30.42.10">
    <property type="match status" value="1"/>
</dbReference>
<dbReference type="Gene3D" id="1.20.1480.20">
    <property type="entry name" value="MAST3 pre-PK domain-like"/>
    <property type="match status" value="1"/>
</dbReference>
<dbReference type="Gene3D" id="3.30.200.20">
    <property type="entry name" value="Phosphorylase Kinase, domain 1"/>
    <property type="match status" value="1"/>
</dbReference>
<dbReference type="Gene3D" id="1.10.510.10">
    <property type="entry name" value="Transferase(Phosphotransferase) domain 1"/>
    <property type="match status" value="1"/>
</dbReference>
<dbReference type="InterPro" id="IPR000961">
    <property type="entry name" value="AGC-kinase_C"/>
</dbReference>
<dbReference type="InterPro" id="IPR011009">
    <property type="entry name" value="Kinase-like_dom_sf"/>
</dbReference>
<dbReference type="InterPro" id="IPR037711">
    <property type="entry name" value="MAST"/>
</dbReference>
<dbReference type="InterPro" id="IPR015022">
    <property type="entry name" value="MAST_pre-PK_dom"/>
</dbReference>
<dbReference type="InterPro" id="IPR023142">
    <property type="entry name" value="MAST_pre-PK_dom_sf"/>
</dbReference>
<dbReference type="InterPro" id="IPR001478">
    <property type="entry name" value="PDZ"/>
</dbReference>
<dbReference type="InterPro" id="IPR041489">
    <property type="entry name" value="PDZ_6"/>
</dbReference>
<dbReference type="InterPro" id="IPR036034">
    <property type="entry name" value="PDZ_sf"/>
</dbReference>
<dbReference type="InterPro" id="IPR000719">
    <property type="entry name" value="Prot_kinase_dom"/>
</dbReference>
<dbReference type="InterPro" id="IPR008271">
    <property type="entry name" value="Ser/Thr_kinase_AS"/>
</dbReference>
<dbReference type="InterPro" id="IPR050236">
    <property type="entry name" value="Ser_Thr_kinase_AGC"/>
</dbReference>
<dbReference type="PANTHER" id="PTHR24356:SF136">
    <property type="entry name" value="MICROTUBULE-ASSOCIATED SERINE_THREONINE-PROTEIN KINASE 2"/>
    <property type="match status" value="1"/>
</dbReference>
<dbReference type="PANTHER" id="PTHR24356">
    <property type="entry name" value="SERINE/THREONINE-PROTEIN KINASE"/>
    <property type="match status" value="1"/>
</dbReference>
<dbReference type="Pfam" id="PF08926">
    <property type="entry name" value="DUF1908"/>
    <property type="match status" value="1"/>
</dbReference>
<dbReference type="Pfam" id="PF17820">
    <property type="entry name" value="PDZ_6"/>
    <property type="match status" value="1"/>
</dbReference>
<dbReference type="Pfam" id="PF00069">
    <property type="entry name" value="Pkinase"/>
    <property type="match status" value="1"/>
</dbReference>
<dbReference type="SMART" id="SM00228">
    <property type="entry name" value="PDZ"/>
    <property type="match status" value="1"/>
</dbReference>
<dbReference type="SMART" id="SM00220">
    <property type="entry name" value="S_TKc"/>
    <property type="match status" value="1"/>
</dbReference>
<dbReference type="SUPFAM" id="SSF140482">
    <property type="entry name" value="MAST3 pre-PK domain-like"/>
    <property type="match status" value="1"/>
</dbReference>
<dbReference type="SUPFAM" id="SSF50156">
    <property type="entry name" value="PDZ domain-like"/>
    <property type="match status" value="1"/>
</dbReference>
<dbReference type="SUPFAM" id="SSF56112">
    <property type="entry name" value="Protein kinase-like (PK-like)"/>
    <property type="match status" value="1"/>
</dbReference>
<dbReference type="PROSITE" id="PS51285">
    <property type="entry name" value="AGC_KINASE_CTER"/>
    <property type="match status" value="1"/>
</dbReference>
<dbReference type="PROSITE" id="PS50106">
    <property type="entry name" value="PDZ"/>
    <property type="match status" value="1"/>
</dbReference>
<dbReference type="PROSITE" id="PS50011">
    <property type="entry name" value="PROTEIN_KINASE_DOM"/>
    <property type="match status" value="1"/>
</dbReference>
<dbReference type="PROSITE" id="PS00108">
    <property type="entry name" value="PROTEIN_KINASE_ST"/>
    <property type="match status" value="1"/>
</dbReference>
<feature type="chain" id="PRO_0000086312" description="Microtubule-associated serine/threonine-protein kinase 2">
    <location>
        <begin position="1"/>
        <end position="1798"/>
    </location>
</feature>
<feature type="domain" description="Protein kinase" evidence="5">
    <location>
        <begin position="512"/>
        <end position="785"/>
    </location>
</feature>
<feature type="domain" description="AGC-kinase C-terminal" evidence="6">
    <location>
        <begin position="786"/>
        <end position="854"/>
    </location>
</feature>
<feature type="domain" description="PDZ" evidence="4">
    <location>
        <begin position="1104"/>
        <end position="1192"/>
    </location>
</feature>
<feature type="region of interest" description="Disordered" evidence="8">
    <location>
        <begin position="1"/>
        <end position="61"/>
    </location>
</feature>
<feature type="region of interest" description="Disordered" evidence="8">
    <location>
        <begin position="172"/>
        <end position="257"/>
    </location>
</feature>
<feature type="region of interest" description="Disordered" evidence="8">
    <location>
        <begin position="278"/>
        <end position="305"/>
    </location>
</feature>
<feature type="region of interest" description="Disordered" evidence="8">
    <location>
        <begin position="477"/>
        <end position="508"/>
    </location>
</feature>
<feature type="region of interest" description="Disordered" evidence="8">
    <location>
        <begin position="860"/>
        <end position="892"/>
    </location>
</feature>
<feature type="region of interest" description="Disordered" evidence="8">
    <location>
        <begin position="908"/>
        <end position="927"/>
    </location>
</feature>
<feature type="region of interest" description="Disordered" evidence="8">
    <location>
        <begin position="934"/>
        <end position="1013"/>
    </location>
</feature>
<feature type="region of interest" description="Disordered" evidence="8">
    <location>
        <begin position="1067"/>
        <end position="1097"/>
    </location>
</feature>
<feature type="region of interest" description="Disordered" evidence="8">
    <location>
        <begin position="1195"/>
        <end position="1725"/>
    </location>
</feature>
<feature type="region of interest" description="Disordered" evidence="8">
    <location>
        <begin position="1738"/>
        <end position="1798"/>
    </location>
</feature>
<feature type="compositionally biased region" description="Basic and acidic residues" evidence="8">
    <location>
        <begin position="7"/>
        <end position="22"/>
    </location>
</feature>
<feature type="compositionally biased region" description="Basic and acidic residues" evidence="8">
    <location>
        <begin position="43"/>
        <end position="60"/>
    </location>
</feature>
<feature type="compositionally biased region" description="Polar residues" evidence="8">
    <location>
        <begin position="172"/>
        <end position="185"/>
    </location>
</feature>
<feature type="compositionally biased region" description="Polar residues" evidence="8">
    <location>
        <begin position="197"/>
        <end position="210"/>
    </location>
</feature>
<feature type="compositionally biased region" description="Polar residues" evidence="8">
    <location>
        <begin position="233"/>
        <end position="244"/>
    </location>
</feature>
<feature type="compositionally biased region" description="Low complexity" evidence="8">
    <location>
        <begin position="245"/>
        <end position="254"/>
    </location>
</feature>
<feature type="compositionally biased region" description="Basic and acidic residues" evidence="8">
    <location>
        <begin position="874"/>
        <end position="892"/>
    </location>
</feature>
<feature type="compositionally biased region" description="Basic and acidic residues" evidence="8">
    <location>
        <begin position="976"/>
        <end position="989"/>
    </location>
</feature>
<feature type="compositionally biased region" description="Polar residues" evidence="8">
    <location>
        <begin position="992"/>
        <end position="1009"/>
    </location>
</feature>
<feature type="compositionally biased region" description="Low complexity" evidence="8">
    <location>
        <begin position="1072"/>
        <end position="1088"/>
    </location>
</feature>
<feature type="compositionally biased region" description="Basic residues" evidence="8">
    <location>
        <begin position="1204"/>
        <end position="1218"/>
    </location>
</feature>
<feature type="compositionally biased region" description="Low complexity" evidence="8">
    <location>
        <begin position="1240"/>
        <end position="1273"/>
    </location>
</feature>
<feature type="compositionally biased region" description="Low complexity" evidence="8">
    <location>
        <begin position="1287"/>
        <end position="1312"/>
    </location>
</feature>
<feature type="compositionally biased region" description="Low complexity" evidence="8">
    <location>
        <begin position="1408"/>
        <end position="1417"/>
    </location>
</feature>
<feature type="compositionally biased region" description="Basic and acidic residues" evidence="8">
    <location>
        <begin position="1418"/>
        <end position="1443"/>
    </location>
</feature>
<feature type="compositionally biased region" description="Basic and acidic residues" evidence="8">
    <location>
        <begin position="1482"/>
        <end position="1502"/>
    </location>
</feature>
<feature type="compositionally biased region" description="Acidic residues" evidence="8">
    <location>
        <begin position="1503"/>
        <end position="1512"/>
    </location>
</feature>
<feature type="compositionally biased region" description="Low complexity" evidence="8">
    <location>
        <begin position="1588"/>
        <end position="1598"/>
    </location>
</feature>
<feature type="compositionally biased region" description="Low complexity" evidence="8">
    <location>
        <begin position="1627"/>
        <end position="1654"/>
    </location>
</feature>
<feature type="compositionally biased region" description="Polar residues" evidence="8">
    <location>
        <begin position="1685"/>
        <end position="1696"/>
    </location>
</feature>
<feature type="active site" description="Proton acceptor" evidence="3 5 7">
    <location>
        <position position="635"/>
    </location>
</feature>
<feature type="binding site" evidence="3 5">
    <location>
        <begin position="518"/>
        <end position="526"/>
    </location>
    <ligand>
        <name>ATP</name>
        <dbReference type="ChEBI" id="CHEBI:30616"/>
    </ligand>
</feature>
<feature type="binding site" evidence="3 5">
    <location>
        <position position="541"/>
    </location>
    <ligand>
        <name>ATP</name>
        <dbReference type="ChEBI" id="CHEBI:30616"/>
    </ligand>
</feature>
<feature type="modified residue" description="Phosphoserine" evidence="28">
    <location>
        <position position="66"/>
    </location>
</feature>
<feature type="modified residue" description="Phosphoserine" evidence="23 24 25 26 28">
    <location>
        <position position="74"/>
    </location>
</feature>
<feature type="modified residue" description="Phosphoserine" evidence="25 27 28">
    <location>
        <position position="148"/>
    </location>
</feature>
<feature type="modified residue" description="Phosphoserine" evidence="2">
    <location>
        <position position="151"/>
    </location>
</feature>
<feature type="modified residue" description="Phosphoserine" evidence="26 28">
    <location>
        <position position="209"/>
    </location>
</feature>
<feature type="modified residue" description="Phosphoserine" evidence="28">
    <location>
        <position position="290"/>
    </location>
</feature>
<feature type="modified residue" description="Phosphoserine" evidence="30">
    <location>
        <position position="874"/>
    </location>
</feature>
<feature type="modified residue" description="Phosphoserine" evidence="28">
    <location>
        <position position="876"/>
    </location>
</feature>
<feature type="modified residue" description="Phosphoserine" evidence="2">
    <location>
        <position position="895"/>
    </location>
</feature>
<feature type="modified residue" description="Phosphoserine" evidence="23 28">
    <location>
        <position position="900"/>
    </location>
</feature>
<feature type="modified residue" description="Omega-N-methylarginine" evidence="29">
    <location>
        <position position="1004"/>
    </location>
</feature>
<feature type="modified residue" description="Phosphoserine" evidence="27 28">
    <location>
        <position position="1032"/>
    </location>
</feature>
<feature type="modified residue" description="Phosphoserine" evidence="28">
    <location>
        <position position="1256"/>
    </location>
</feature>
<feature type="modified residue" description="Phosphoserine" evidence="2">
    <location>
        <position position="1337"/>
    </location>
</feature>
<feature type="modified residue" description="Phosphoserine" evidence="28">
    <location>
        <position position="1364"/>
    </location>
</feature>
<feature type="modified residue" description="Phosphoserine" evidence="28">
    <location>
        <position position="1447"/>
    </location>
</feature>
<feature type="modified residue" description="Phosphothreonine" evidence="22">
    <location>
        <position position="1508"/>
    </location>
</feature>
<feature type="splice variant" id="VSP_051698" description="In isoform 2." evidence="14">
    <location>
        <begin position="327"/>
        <end position="396"/>
    </location>
</feature>
<feature type="splice variant" id="VSP_051699" description="In isoform 2." evidence="14">
    <location>
        <begin position="1091"/>
        <end position="1113"/>
    </location>
</feature>
<feature type="splice variant" id="VSP_051700" description="In isoform 2." evidence="14">
    <location>
        <begin position="1290"/>
        <end position="1386"/>
    </location>
</feature>
<feature type="sequence variant" id="VAR_040771" description="In dbSNP:rs55914403." evidence="11">
    <original>L</original>
    <variation>F</variation>
    <location>
        <position position="69"/>
    </location>
</feature>
<feature type="sequence variant" id="VAR_040772" description="In an ovarian mucinous carcinoma sample; somatic mutation." evidence="11">
    <original>K</original>
    <variation>E</variation>
    <location>
        <position position="275"/>
    </location>
</feature>
<feature type="sequence variant" id="VAR_040773" description="In dbSNP:rs11211247." evidence="9 11">
    <original>D</original>
    <variation>E</variation>
    <location>
        <position position="388"/>
    </location>
</feature>
<feature type="sequence variant" id="VAR_040774" description="In a breast mucinous carcinoma sample; somatic mutation." evidence="11">
    <original>G</original>
    <variation>A</variation>
    <location>
        <position position="655"/>
    </location>
</feature>
<feature type="sequence variant" id="VAR_040775" description="In dbSNP:rs1707336." evidence="9 10 11 13">
    <original>I</original>
    <variation>M</variation>
    <location>
        <position position="659"/>
    </location>
</feature>
<feature type="sequence variant" id="VAR_040776" description="In dbSNP:rs56114653." evidence="11">
    <original>R</original>
    <variation>L</variation>
    <location>
        <position position="991"/>
    </location>
</feature>
<feature type="sequence variant" id="VAR_040777" description="In dbSNP:rs1052607." evidence="11">
    <original>K</original>
    <variation>R</variation>
    <location>
        <position position="1197"/>
    </location>
</feature>
<feature type="sequence variant" id="VAR_040778" description="In dbSNP:rs56060730." evidence="11">
    <original>D</original>
    <variation>E</variation>
    <location>
        <position position="1221"/>
    </location>
</feature>
<feature type="sequence variant" id="VAR_040779" description="In dbSNP:rs56309943." evidence="11">
    <original>R</original>
    <variation>L</variation>
    <location>
        <position position="1246"/>
    </location>
</feature>
<feature type="sequence variant" id="VAR_040780" description="In dbSNP:rs33931638." evidence="11">
    <original>V</original>
    <variation>M</variation>
    <location>
        <position position="1304"/>
    </location>
</feature>
<feature type="sequence variant" id="VAR_040781" description="In dbSNP:rs3737738." evidence="11">
    <original>A</original>
    <variation>T</variation>
    <location>
        <position position="1463"/>
    </location>
</feature>
<feature type="sequence variant" id="VAR_040782" description="In dbSNP:rs3737737." evidence="11">
    <original>G</original>
    <variation>A</variation>
    <location>
        <position position="1468"/>
    </location>
</feature>
<feature type="sequence variant" id="VAR_040783" description="In dbSNP:rs1052610." evidence="9 11 13">
    <original>D</original>
    <variation>G</variation>
    <location>
        <position position="1551"/>
    </location>
</feature>
<feature type="sequence variant" id="VAR_051645" description="In dbSNP:rs35474583.">
    <original>T</original>
    <variation>I</variation>
    <location>
        <position position="1608"/>
    </location>
</feature>
<feature type="sequence variant" id="VAR_040784" description="In dbSNP:rs34070850." evidence="11">
    <original>K</original>
    <variation>R</variation>
    <location>
        <position position="1673"/>
    </location>
</feature>
<feature type="sequence variant" id="VAR_040785" evidence="11">
    <original>G</original>
    <variation>E</variation>
    <location>
        <position position="1703"/>
    </location>
</feature>
<feature type="sequence conflict" description="In Ref. 3; AAH65499." evidence="15" ref="3">
    <location>
        <position position="1225"/>
    </location>
</feature>
<feature type="strand" evidence="31">
    <location>
        <begin position="1104"/>
        <end position="1108"/>
    </location>
</feature>
<feature type="strand" evidence="31">
    <location>
        <begin position="1116"/>
        <end position="1124"/>
    </location>
</feature>
<feature type="strand" evidence="31">
    <location>
        <begin position="1126"/>
        <end position="1129"/>
    </location>
</feature>
<feature type="strand" evidence="31">
    <location>
        <begin position="1131"/>
        <end position="1140"/>
    </location>
</feature>
<feature type="strand" evidence="31">
    <location>
        <begin position="1142"/>
        <end position="1145"/>
    </location>
</feature>
<feature type="helix" evidence="31">
    <location>
        <begin position="1146"/>
        <end position="1149"/>
    </location>
</feature>
<feature type="strand" evidence="31">
    <location>
        <begin position="1156"/>
        <end position="1164"/>
    </location>
</feature>
<feature type="helix" evidence="31">
    <location>
        <begin position="1170"/>
        <end position="1180"/>
    </location>
</feature>
<feature type="strand" evidence="31">
    <location>
        <begin position="1182"/>
        <end position="1188"/>
    </location>
</feature>
<keyword id="KW-0002">3D-structure</keyword>
<keyword id="KW-0025">Alternative splicing</keyword>
<keyword id="KW-0067">ATP-binding</keyword>
<keyword id="KW-1003">Cell membrane</keyword>
<keyword id="KW-0963">Cytoplasm</keyword>
<keyword id="KW-0206">Cytoskeleton</keyword>
<keyword id="KW-0418">Kinase</keyword>
<keyword id="KW-0460">Magnesium</keyword>
<keyword id="KW-0472">Membrane</keyword>
<keyword id="KW-0479">Metal-binding</keyword>
<keyword id="KW-0488">Methylation</keyword>
<keyword id="KW-0547">Nucleotide-binding</keyword>
<keyword id="KW-0597">Phosphoprotein</keyword>
<keyword id="KW-1267">Proteomics identification</keyword>
<keyword id="KW-1185">Reference proteome</keyword>
<keyword id="KW-0723">Serine/threonine-protein kinase</keyword>
<keyword id="KW-0808">Transferase</keyword>
<keyword id="KW-0832">Ubl conjugation</keyword>
<name>MAST2_HUMAN</name>
<accession>Q6P0Q8</accession>
<accession>O94899</accession>
<accession>Q5VT07</accession>
<accession>Q5VT08</accession>
<accession>Q7LGC4</accession>
<accession>Q8NDG1</accession>
<accession>Q96B94</accession>
<accession>Q9BYE8</accession>
<protein>
    <recommendedName>
        <fullName>Microtubule-associated serine/threonine-protein kinase 2</fullName>
        <ecNumber>2.7.11.1</ecNumber>
    </recommendedName>
</protein>
<proteinExistence type="evidence at protein level"/>